<gene>
    <name evidence="1" type="primary">eno</name>
    <name type="ordered locus">ABBFA_001557</name>
</gene>
<sequence>MSQIVDIRAREILDSRGNPTIEADVILESGVVGRACAPSGASTGSREALELRDGDKSRYLGKGVRTAVQNVNSSIHELLVGQSVFEQKALDEKMIAFDGTENKSKLGANATLAVSLAAAHAAAAEQKLPLFQYIANLRGQTTLTMPVPMMNILNGGAHADNTVDIQEFMIEPVGFTSFAEALRAGAEVFHSLKSVLKKQGLNTAVGDEGGFAPNLRSNEEAITVILQAIEQTGYKAGSDIMLALDCASSEFYKNGQYILEGEGNKSFTSNQFADYLAGLVKQYPIISIEDGLDESDWEGWSYLTSILGDKIQLVGDDLFVTNPKILQRGIDEKVGNSILIKYNQIGTLTETLDAIYLAKANGYTTVISHRSGETEDSTIADLAVGTAAGQIKTGSLCRSDRVSKYNQLLRIEELTKAVYRGKAEFKGLN</sequence>
<accession>B7H227</accession>
<dbReference type="EC" id="4.2.1.11" evidence="1"/>
<dbReference type="EMBL" id="CP001172">
    <property type="protein sequence ID" value="ACJ58651.1"/>
    <property type="molecule type" value="Genomic_DNA"/>
</dbReference>
<dbReference type="RefSeq" id="WP_000078452.1">
    <property type="nucleotide sequence ID" value="NZ_CP001172.1"/>
</dbReference>
<dbReference type="SMR" id="B7H227"/>
<dbReference type="GeneID" id="92894149"/>
<dbReference type="HOGENOM" id="CLU_031223_2_1_6"/>
<dbReference type="UniPathway" id="UPA00109">
    <property type="reaction ID" value="UER00187"/>
</dbReference>
<dbReference type="Proteomes" id="UP000006924">
    <property type="component" value="Chromosome"/>
</dbReference>
<dbReference type="GO" id="GO:0009986">
    <property type="term" value="C:cell surface"/>
    <property type="evidence" value="ECO:0007669"/>
    <property type="project" value="UniProtKB-SubCell"/>
</dbReference>
<dbReference type="GO" id="GO:0005576">
    <property type="term" value="C:extracellular region"/>
    <property type="evidence" value="ECO:0007669"/>
    <property type="project" value="UniProtKB-SubCell"/>
</dbReference>
<dbReference type="GO" id="GO:0000015">
    <property type="term" value="C:phosphopyruvate hydratase complex"/>
    <property type="evidence" value="ECO:0007669"/>
    <property type="project" value="InterPro"/>
</dbReference>
<dbReference type="GO" id="GO:0000287">
    <property type="term" value="F:magnesium ion binding"/>
    <property type="evidence" value="ECO:0007669"/>
    <property type="project" value="UniProtKB-UniRule"/>
</dbReference>
<dbReference type="GO" id="GO:0004634">
    <property type="term" value="F:phosphopyruvate hydratase activity"/>
    <property type="evidence" value="ECO:0007669"/>
    <property type="project" value="UniProtKB-UniRule"/>
</dbReference>
<dbReference type="GO" id="GO:0006096">
    <property type="term" value="P:glycolytic process"/>
    <property type="evidence" value="ECO:0007669"/>
    <property type="project" value="UniProtKB-UniRule"/>
</dbReference>
<dbReference type="CDD" id="cd03313">
    <property type="entry name" value="enolase"/>
    <property type="match status" value="1"/>
</dbReference>
<dbReference type="FunFam" id="3.20.20.120:FF:000001">
    <property type="entry name" value="Enolase"/>
    <property type="match status" value="1"/>
</dbReference>
<dbReference type="FunFam" id="3.30.390.10:FF:000001">
    <property type="entry name" value="Enolase"/>
    <property type="match status" value="1"/>
</dbReference>
<dbReference type="Gene3D" id="3.20.20.120">
    <property type="entry name" value="Enolase-like C-terminal domain"/>
    <property type="match status" value="1"/>
</dbReference>
<dbReference type="Gene3D" id="3.30.390.10">
    <property type="entry name" value="Enolase-like, N-terminal domain"/>
    <property type="match status" value="1"/>
</dbReference>
<dbReference type="HAMAP" id="MF_00318">
    <property type="entry name" value="Enolase"/>
    <property type="match status" value="1"/>
</dbReference>
<dbReference type="InterPro" id="IPR000941">
    <property type="entry name" value="Enolase"/>
</dbReference>
<dbReference type="InterPro" id="IPR036849">
    <property type="entry name" value="Enolase-like_C_sf"/>
</dbReference>
<dbReference type="InterPro" id="IPR029017">
    <property type="entry name" value="Enolase-like_N"/>
</dbReference>
<dbReference type="InterPro" id="IPR020810">
    <property type="entry name" value="Enolase_C"/>
</dbReference>
<dbReference type="InterPro" id="IPR020809">
    <property type="entry name" value="Enolase_CS"/>
</dbReference>
<dbReference type="InterPro" id="IPR020811">
    <property type="entry name" value="Enolase_N"/>
</dbReference>
<dbReference type="NCBIfam" id="TIGR01060">
    <property type="entry name" value="eno"/>
    <property type="match status" value="1"/>
</dbReference>
<dbReference type="PANTHER" id="PTHR11902">
    <property type="entry name" value="ENOLASE"/>
    <property type="match status" value="1"/>
</dbReference>
<dbReference type="PANTHER" id="PTHR11902:SF1">
    <property type="entry name" value="ENOLASE"/>
    <property type="match status" value="1"/>
</dbReference>
<dbReference type="Pfam" id="PF00113">
    <property type="entry name" value="Enolase_C"/>
    <property type="match status" value="1"/>
</dbReference>
<dbReference type="Pfam" id="PF03952">
    <property type="entry name" value="Enolase_N"/>
    <property type="match status" value="1"/>
</dbReference>
<dbReference type="PIRSF" id="PIRSF001400">
    <property type="entry name" value="Enolase"/>
    <property type="match status" value="1"/>
</dbReference>
<dbReference type="PRINTS" id="PR00148">
    <property type="entry name" value="ENOLASE"/>
</dbReference>
<dbReference type="SFLD" id="SFLDF00002">
    <property type="entry name" value="enolase"/>
    <property type="match status" value="1"/>
</dbReference>
<dbReference type="SFLD" id="SFLDG00178">
    <property type="entry name" value="enolase"/>
    <property type="match status" value="1"/>
</dbReference>
<dbReference type="SMART" id="SM01192">
    <property type="entry name" value="Enolase_C"/>
    <property type="match status" value="1"/>
</dbReference>
<dbReference type="SMART" id="SM01193">
    <property type="entry name" value="Enolase_N"/>
    <property type="match status" value="1"/>
</dbReference>
<dbReference type="SUPFAM" id="SSF51604">
    <property type="entry name" value="Enolase C-terminal domain-like"/>
    <property type="match status" value="1"/>
</dbReference>
<dbReference type="SUPFAM" id="SSF54826">
    <property type="entry name" value="Enolase N-terminal domain-like"/>
    <property type="match status" value="1"/>
</dbReference>
<dbReference type="PROSITE" id="PS00164">
    <property type="entry name" value="ENOLASE"/>
    <property type="match status" value="1"/>
</dbReference>
<name>ENO_ACIB3</name>
<keyword id="KW-0963">Cytoplasm</keyword>
<keyword id="KW-0324">Glycolysis</keyword>
<keyword id="KW-0456">Lyase</keyword>
<keyword id="KW-0460">Magnesium</keyword>
<keyword id="KW-0479">Metal-binding</keyword>
<keyword id="KW-0964">Secreted</keyword>
<comment type="function">
    <text evidence="1">Catalyzes the reversible conversion of 2-phosphoglycerate (2-PG) into phosphoenolpyruvate (PEP). It is essential for the degradation of carbohydrates via glycolysis.</text>
</comment>
<comment type="catalytic activity">
    <reaction evidence="1">
        <text>(2R)-2-phosphoglycerate = phosphoenolpyruvate + H2O</text>
        <dbReference type="Rhea" id="RHEA:10164"/>
        <dbReference type="ChEBI" id="CHEBI:15377"/>
        <dbReference type="ChEBI" id="CHEBI:58289"/>
        <dbReference type="ChEBI" id="CHEBI:58702"/>
        <dbReference type="EC" id="4.2.1.11"/>
    </reaction>
</comment>
<comment type="cofactor">
    <cofactor evidence="1">
        <name>Mg(2+)</name>
        <dbReference type="ChEBI" id="CHEBI:18420"/>
    </cofactor>
    <text evidence="1">Binds a second Mg(2+) ion via substrate during catalysis.</text>
</comment>
<comment type="pathway">
    <text evidence="1">Carbohydrate degradation; glycolysis; pyruvate from D-glyceraldehyde 3-phosphate: step 4/5.</text>
</comment>
<comment type="subunit">
    <text evidence="1">Component of the RNA degradosome, a multiprotein complex involved in RNA processing and mRNA degradation.</text>
</comment>
<comment type="subcellular location">
    <subcellularLocation>
        <location evidence="1">Cytoplasm</location>
    </subcellularLocation>
    <subcellularLocation>
        <location evidence="1">Secreted</location>
    </subcellularLocation>
    <subcellularLocation>
        <location evidence="1">Cell surface</location>
    </subcellularLocation>
    <text evidence="1">Fractions of enolase are present in both the cytoplasm and on the cell surface.</text>
</comment>
<comment type="similarity">
    <text evidence="1">Belongs to the enolase family.</text>
</comment>
<organism>
    <name type="scientific">Acinetobacter baumannii (strain AB307-0294)</name>
    <dbReference type="NCBI Taxonomy" id="557600"/>
    <lineage>
        <taxon>Bacteria</taxon>
        <taxon>Pseudomonadati</taxon>
        <taxon>Pseudomonadota</taxon>
        <taxon>Gammaproteobacteria</taxon>
        <taxon>Moraxellales</taxon>
        <taxon>Moraxellaceae</taxon>
        <taxon>Acinetobacter</taxon>
        <taxon>Acinetobacter calcoaceticus/baumannii complex</taxon>
    </lineage>
</organism>
<evidence type="ECO:0000255" key="1">
    <source>
        <dbReference type="HAMAP-Rule" id="MF_00318"/>
    </source>
</evidence>
<feature type="chain" id="PRO_1000119561" description="Enolase">
    <location>
        <begin position="1"/>
        <end position="429"/>
    </location>
</feature>
<feature type="active site" description="Proton donor" evidence="1">
    <location>
        <position position="208"/>
    </location>
</feature>
<feature type="active site" description="Proton acceptor" evidence="1">
    <location>
        <position position="341"/>
    </location>
</feature>
<feature type="binding site" evidence="1">
    <location>
        <position position="166"/>
    </location>
    <ligand>
        <name>(2R)-2-phosphoglycerate</name>
        <dbReference type="ChEBI" id="CHEBI:58289"/>
    </ligand>
</feature>
<feature type="binding site" evidence="1">
    <location>
        <position position="245"/>
    </location>
    <ligand>
        <name>Mg(2+)</name>
        <dbReference type="ChEBI" id="CHEBI:18420"/>
    </ligand>
</feature>
<feature type="binding site" evidence="1">
    <location>
        <position position="289"/>
    </location>
    <ligand>
        <name>Mg(2+)</name>
        <dbReference type="ChEBI" id="CHEBI:18420"/>
    </ligand>
</feature>
<feature type="binding site" evidence="1">
    <location>
        <position position="316"/>
    </location>
    <ligand>
        <name>Mg(2+)</name>
        <dbReference type="ChEBI" id="CHEBI:18420"/>
    </ligand>
</feature>
<feature type="binding site" evidence="1">
    <location>
        <position position="341"/>
    </location>
    <ligand>
        <name>(2R)-2-phosphoglycerate</name>
        <dbReference type="ChEBI" id="CHEBI:58289"/>
    </ligand>
</feature>
<feature type="binding site" evidence="1">
    <location>
        <position position="370"/>
    </location>
    <ligand>
        <name>(2R)-2-phosphoglycerate</name>
        <dbReference type="ChEBI" id="CHEBI:58289"/>
    </ligand>
</feature>
<feature type="binding site" evidence="1">
    <location>
        <position position="371"/>
    </location>
    <ligand>
        <name>(2R)-2-phosphoglycerate</name>
        <dbReference type="ChEBI" id="CHEBI:58289"/>
    </ligand>
</feature>
<feature type="binding site" evidence="1">
    <location>
        <position position="392"/>
    </location>
    <ligand>
        <name>(2R)-2-phosphoglycerate</name>
        <dbReference type="ChEBI" id="CHEBI:58289"/>
    </ligand>
</feature>
<protein>
    <recommendedName>
        <fullName evidence="1">Enolase</fullName>
        <ecNumber evidence="1">4.2.1.11</ecNumber>
    </recommendedName>
    <alternativeName>
        <fullName evidence="1">2-phospho-D-glycerate hydro-lyase</fullName>
    </alternativeName>
    <alternativeName>
        <fullName evidence="1">2-phosphoglycerate dehydratase</fullName>
    </alternativeName>
</protein>
<reference key="1">
    <citation type="journal article" date="2008" name="J. Bacteriol.">
        <title>Comparative genome sequence analysis of multidrug-resistant Acinetobacter baumannii.</title>
        <authorList>
            <person name="Adams M.D."/>
            <person name="Goglin K."/>
            <person name="Molyneaux N."/>
            <person name="Hujer K.M."/>
            <person name="Lavender H."/>
            <person name="Jamison J.J."/>
            <person name="MacDonald I.J."/>
            <person name="Martin K.M."/>
            <person name="Russo T."/>
            <person name="Campagnari A.A."/>
            <person name="Hujer A.M."/>
            <person name="Bonomo R.A."/>
            <person name="Gill S.R."/>
        </authorList>
    </citation>
    <scope>NUCLEOTIDE SEQUENCE [LARGE SCALE GENOMIC DNA]</scope>
    <source>
        <strain>AB307-0294</strain>
    </source>
</reference>
<proteinExistence type="inferred from homology"/>